<name>MAL_BOVIN</name>
<reference key="1">
    <citation type="submission" date="2005-08" db="EMBL/GenBank/DDBJ databases">
        <authorList>
            <consortium name="NIH - Mammalian Gene Collection (MGC) project"/>
        </authorList>
    </citation>
    <scope>NUCLEOTIDE SEQUENCE [LARGE SCALE MRNA]</scope>
    <source>
        <strain>Hereford</strain>
        <tissue>Hypothalamus</tissue>
    </source>
</reference>
<keyword id="KW-1003">Cell membrane</keyword>
<keyword id="KW-0449">Lipoprotein</keyword>
<keyword id="KW-0472">Membrane</keyword>
<keyword id="KW-1185">Reference proteome</keyword>
<keyword id="KW-0812">Transmembrane</keyword>
<keyword id="KW-1133">Transmembrane helix</keyword>
<protein>
    <recommendedName>
        <fullName>Myelin and lymphocyte protein</fullName>
    </recommendedName>
</protein>
<comment type="function">
    <text evidence="2">May be involved in vesicular trafficking from the Golgi apparatus to the cell membrane. Plays a role in the maintenance of the myelin sheath, and in axon-glia and glia-glia interactions.</text>
</comment>
<comment type="subunit">
    <text evidence="3">Interacts with PLP1.</text>
</comment>
<comment type="subcellular location">
    <subcellularLocation>
        <location evidence="1">Membrane</location>
        <topology evidence="1">Multi-pass membrane protein</topology>
    </subcellularLocation>
    <subcellularLocation>
        <location evidence="3">Cell membrane</location>
    </subcellularLocation>
    <text evidence="2">Found in lipid rafts.</text>
</comment>
<comment type="PTM">
    <text evidence="1">Lipoprotein.</text>
</comment>
<comment type="similarity">
    <text evidence="6">Belongs to the MAL family.</text>
</comment>
<gene>
    <name type="primary">MAL</name>
</gene>
<organism>
    <name type="scientific">Bos taurus</name>
    <name type="common">Bovine</name>
    <dbReference type="NCBI Taxonomy" id="9913"/>
    <lineage>
        <taxon>Eukaryota</taxon>
        <taxon>Metazoa</taxon>
        <taxon>Chordata</taxon>
        <taxon>Craniata</taxon>
        <taxon>Vertebrata</taxon>
        <taxon>Euteleostomi</taxon>
        <taxon>Mammalia</taxon>
        <taxon>Eutheria</taxon>
        <taxon>Laurasiatheria</taxon>
        <taxon>Artiodactyla</taxon>
        <taxon>Ruminantia</taxon>
        <taxon>Pecora</taxon>
        <taxon>Bovidae</taxon>
        <taxon>Bovinae</taxon>
        <taxon>Bos</taxon>
    </lineage>
</organism>
<feature type="chain" id="PRO_0000238631" description="Myelin and lymphocyte protein">
    <location>
        <begin position="1"/>
        <end position="153"/>
    </location>
</feature>
<feature type="topological domain" description="Cytoplasmic" evidence="4">
    <location>
        <begin position="1"/>
        <end position="24"/>
    </location>
</feature>
<feature type="transmembrane region" description="Helical" evidence="4">
    <location>
        <begin position="25"/>
        <end position="46"/>
    </location>
</feature>
<feature type="topological domain" description="Extracellular" evidence="4">
    <location>
        <begin position="47"/>
        <end position="53"/>
    </location>
</feature>
<feature type="transmembrane region" description="Helical" evidence="4">
    <location>
        <begin position="54"/>
        <end position="75"/>
    </location>
</feature>
<feature type="topological domain" description="Cytoplasmic" evidence="4">
    <location>
        <begin position="76"/>
        <end position="92"/>
    </location>
</feature>
<feature type="transmembrane region" description="Helical" evidence="4">
    <location>
        <begin position="93"/>
        <end position="114"/>
    </location>
</feature>
<feature type="topological domain" description="Extracellular" evidence="4">
    <location>
        <begin position="115"/>
        <end position="125"/>
    </location>
</feature>
<feature type="transmembrane region" description="Helical" evidence="4">
    <location>
        <begin position="126"/>
        <end position="147"/>
    </location>
</feature>
<feature type="topological domain" description="Cytoplasmic" evidence="4">
    <location>
        <begin position="148"/>
        <end position="153"/>
    </location>
</feature>
<feature type="domain" description="MARVEL" evidence="5">
    <location>
        <begin position="18"/>
        <end position="151"/>
    </location>
</feature>
<proteinExistence type="evidence at transcript level"/>
<sequence>MAPSAASGVSSLPSGFAVFTTFPDLLFIFEFVFGGLVWILVSSSHVPIPLIQGWVMFASVFCFVATTVLAFLYVIGAHGNRTSWITLDAAYHCVASLFYFGASVLEALAAIQLQDGFLYKYYHENISAVVFSYVATLLYVVHAVFSLIRWKSS</sequence>
<dbReference type="EMBL" id="BC103042">
    <property type="protein sequence ID" value="AAI03043.1"/>
    <property type="molecule type" value="mRNA"/>
</dbReference>
<dbReference type="RefSeq" id="NP_001068896.1">
    <property type="nucleotide sequence ID" value="NM_001075428.2"/>
</dbReference>
<dbReference type="SMR" id="Q3ZBY0"/>
<dbReference type="FunCoup" id="Q3ZBY0">
    <property type="interactions" value="89"/>
</dbReference>
<dbReference type="STRING" id="9913.ENSBTAP00000061072"/>
<dbReference type="PaxDb" id="9913-ENSBTAP00000033149"/>
<dbReference type="Ensembl" id="ENSBTAT00000033229.3">
    <property type="protein sequence ID" value="ENSBTAP00000033149.3"/>
    <property type="gene ID" value="ENSBTAG00000034586.3"/>
</dbReference>
<dbReference type="GeneID" id="510077"/>
<dbReference type="KEGG" id="bta:510077"/>
<dbReference type="CTD" id="4118"/>
<dbReference type="VEuPathDB" id="HostDB:ENSBTAG00000034586"/>
<dbReference type="eggNOG" id="KOG4788">
    <property type="taxonomic scope" value="Eukaryota"/>
</dbReference>
<dbReference type="GeneTree" id="ENSGT00940000154987"/>
<dbReference type="InParanoid" id="Q3ZBY0"/>
<dbReference type="OMA" id="YIINAHG"/>
<dbReference type="OrthoDB" id="9940869at2759"/>
<dbReference type="Proteomes" id="UP000009136">
    <property type="component" value="Chromosome 11"/>
</dbReference>
<dbReference type="Bgee" id="ENSBTAG00000034586">
    <property type="expression patterns" value="Expressed in anterior segment of eyeball and 96 other cell types or tissues"/>
</dbReference>
<dbReference type="GO" id="GO:0016020">
    <property type="term" value="C:membrane"/>
    <property type="evidence" value="ECO:0000318"/>
    <property type="project" value="GO_Central"/>
</dbReference>
<dbReference type="GO" id="GO:0005886">
    <property type="term" value="C:plasma membrane"/>
    <property type="evidence" value="ECO:0007669"/>
    <property type="project" value="UniProtKB-SubCell"/>
</dbReference>
<dbReference type="GO" id="GO:0019911">
    <property type="term" value="F:structural constituent of myelin sheath"/>
    <property type="evidence" value="ECO:0000318"/>
    <property type="project" value="GO_Central"/>
</dbReference>
<dbReference type="GO" id="GO:0042552">
    <property type="term" value="P:myelination"/>
    <property type="evidence" value="ECO:0000318"/>
    <property type="project" value="GO_Central"/>
</dbReference>
<dbReference type="GO" id="GO:0098737">
    <property type="term" value="P:protein insertion into plasma membrane"/>
    <property type="evidence" value="ECO:0000250"/>
    <property type="project" value="UniProtKB"/>
</dbReference>
<dbReference type="InterPro" id="IPR013295">
    <property type="entry name" value="MAL"/>
</dbReference>
<dbReference type="InterPro" id="IPR008253">
    <property type="entry name" value="Marvel"/>
</dbReference>
<dbReference type="InterPro" id="IPR050578">
    <property type="entry name" value="MARVEL-CKLF_proteins"/>
</dbReference>
<dbReference type="PANTHER" id="PTHR22776">
    <property type="entry name" value="MARVEL-CONTAINING POTENTIAL LIPID RAFT-ASSOCIATED PROTEIN"/>
    <property type="match status" value="1"/>
</dbReference>
<dbReference type="PANTHER" id="PTHR22776:SF12">
    <property type="entry name" value="MYELIN AND LYMPHOCYTE PROTEIN"/>
    <property type="match status" value="1"/>
</dbReference>
<dbReference type="Pfam" id="PF01284">
    <property type="entry name" value="MARVEL"/>
    <property type="match status" value="1"/>
</dbReference>
<dbReference type="PRINTS" id="PR01884">
    <property type="entry name" value="MALPROTEIN"/>
</dbReference>
<dbReference type="PROSITE" id="PS51225">
    <property type="entry name" value="MARVEL"/>
    <property type="match status" value="1"/>
</dbReference>
<accession>Q3ZBY0</accession>
<evidence type="ECO:0000250" key="1"/>
<evidence type="ECO:0000250" key="2">
    <source>
        <dbReference type="UniProtKB" id="O09198"/>
    </source>
</evidence>
<evidence type="ECO:0000250" key="3">
    <source>
        <dbReference type="UniProtKB" id="P21145"/>
    </source>
</evidence>
<evidence type="ECO:0000255" key="4"/>
<evidence type="ECO:0000255" key="5">
    <source>
        <dbReference type="PROSITE-ProRule" id="PRU00581"/>
    </source>
</evidence>
<evidence type="ECO:0000305" key="6"/>